<protein>
    <recommendedName>
        <fullName evidence="1">Chaperone protein DnaJ</fullName>
    </recommendedName>
</protein>
<reference key="1">
    <citation type="journal article" date="2007" name="J. Bacteriol.">
        <title>The complete genome sequence of Campylobacter jejuni strain 81116 (NCTC11828).</title>
        <authorList>
            <person name="Pearson B.M."/>
            <person name="Gaskin D.J.H."/>
            <person name="Segers R.P.A.M."/>
            <person name="Wells J.M."/>
            <person name="Nuijten P.J.M."/>
            <person name="van Vliet A.H.M."/>
        </authorList>
    </citation>
    <scope>NUCLEOTIDE SEQUENCE [LARGE SCALE GENOMIC DNA]</scope>
    <source>
        <strain>81116 / NCTC 11828</strain>
    </source>
</reference>
<accession>A8FMW6</accession>
<feature type="chain" id="PRO_1000085168" description="Chaperone protein DnaJ">
    <location>
        <begin position="1"/>
        <end position="374"/>
    </location>
</feature>
<feature type="domain" description="J" evidence="1">
    <location>
        <begin position="4"/>
        <end position="69"/>
    </location>
</feature>
<feature type="repeat" description="CXXCXGXG motif">
    <location>
        <begin position="149"/>
        <end position="156"/>
    </location>
</feature>
<feature type="repeat" description="CXXCXGXG motif">
    <location>
        <begin position="165"/>
        <end position="172"/>
    </location>
</feature>
<feature type="repeat" description="CXXCXGXG motif">
    <location>
        <begin position="187"/>
        <end position="194"/>
    </location>
</feature>
<feature type="repeat" description="CXXCXGXG motif">
    <location>
        <begin position="201"/>
        <end position="208"/>
    </location>
</feature>
<feature type="zinc finger region" description="CR-type" evidence="1">
    <location>
        <begin position="136"/>
        <end position="213"/>
    </location>
</feature>
<feature type="binding site" evidence="1">
    <location>
        <position position="149"/>
    </location>
    <ligand>
        <name>Zn(2+)</name>
        <dbReference type="ChEBI" id="CHEBI:29105"/>
        <label>1</label>
    </ligand>
</feature>
<feature type="binding site" evidence="1">
    <location>
        <position position="152"/>
    </location>
    <ligand>
        <name>Zn(2+)</name>
        <dbReference type="ChEBI" id="CHEBI:29105"/>
        <label>1</label>
    </ligand>
</feature>
<feature type="binding site" evidence="1">
    <location>
        <position position="165"/>
    </location>
    <ligand>
        <name>Zn(2+)</name>
        <dbReference type="ChEBI" id="CHEBI:29105"/>
        <label>2</label>
    </ligand>
</feature>
<feature type="binding site" evidence="1">
    <location>
        <position position="168"/>
    </location>
    <ligand>
        <name>Zn(2+)</name>
        <dbReference type="ChEBI" id="CHEBI:29105"/>
        <label>2</label>
    </ligand>
</feature>
<feature type="binding site" evidence="1">
    <location>
        <position position="187"/>
    </location>
    <ligand>
        <name>Zn(2+)</name>
        <dbReference type="ChEBI" id="CHEBI:29105"/>
        <label>2</label>
    </ligand>
</feature>
<feature type="binding site" evidence="1">
    <location>
        <position position="190"/>
    </location>
    <ligand>
        <name>Zn(2+)</name>
        <dbReference type="ChEBI" id="CHEBI:29105"/>
        <label>2</label>
    </ligand>
</feature>
<feature type="binding site" evidence="1">
    <location>
        <position position="201"/>
    </location>
    <ligand>
        <name>Zn(2+)</name>
        <dbReference type="ChEBI" id="CHEBI:29105"/>
        <label>1</label>
    </ligand>
</feature>
<feature type="binding site" evidence="1">
    <location>
        <position position="204"/>
    </location>
    <ligand>
        <name>Zn(2+)</name>
        <dbReference type="ChEBI" id="CHEBI:29105"/>
        <label>1</label>
    </ligand>
</feature>
<comment type="function">
    <text evidence="1">Participates actively in the response to hyperosmotic and heat shock by preventing the aggregation of stress-denatured proteins and by disaggregating proteins, also in an autonomous, DnaK-independent fashion. Unfolded proteins bind initially to DnaJ; upon interaction with the DnaJ-bound protein, DnaK hydrolyzes its bound ATP, resulting in the formation of a stable complex. GrpE releases ADP from DnaK; ATP binding to DnaK triggers the release of the substrate protein, thus completing the reaction cycle. Several rounds of ATP-dependent interactions between DnaJ, DnaK and GrpE are required for fully efficient folding. Also involved, together with DnaK and GrpE, in the DNA replication of plasmids through activation of initiation proteins.</text>
</comment>
<comment type="cofactor">
    <cofactor evidence="1">
        <name>Zn(2+)</name>
        <dbReference type="ChEBI" id="CHEBI:29105"/>
    </cofactor>
    <text evidence="1">Binds 2 Zn(2+) ions per monomer.</text>
</comment>
<comment type="subunit">
    <text evidence="1">Homodimer.</text>
</comment>
<comment type="subcellular location">
    <subcellularLocation>
        <location evidence="1">Cytoplasm</location>
    </subcellularLocation>
</comment>
<comment type="domain">
    <text evidence="1">The J domain is necessary and sufficient to stimulate DnaK ATPase activity. Zinc center 1 plays an important role in the autonomous, DnaK-independent chaperone activity of DnaJ. Zinc center 2 is essential for interaction with DnaK and for DnaJ activity.</text>
</comment>
<comment type="similarity">
    <text evidence="1">Belongs to the DnaJ family.</text>
</comment>
<gene>
    <name evidence="1" type="primary">dnaJ</name>
    <name type="ordered locus">C8J_1204</name>
</gene>
<sequence>MEISYYEILEITQSADKETIKKAYRKMALKYHPDRNQGDKEAEDKFKLVNEAYEVLSNDEKRAIYDRYGKDALKGGGFGSSSSGFGGFEDLGDIFSSFFGEGFGSSSRRRKSSNDEKIPSDFIVNLKLSFKEAVFGCKKNIDFTYKCSCKTCNGTGAKDGKLQTCPKCQGRGQVGVSQGFITFAQTCPDCQGSGEKASEKCSDCKGLGYNESKDSVELNIPEGIDTGMKLRVNAKGNILKNGTRGDMYVKIIAAEDDTFVRDDDDIYIEFPVFFTQAILGQSIKVPTIRGEATLNLPKGAKDGQRFVLEKEGVKDVHSSRIGNQIVQISIKFPTSLNDEQKELLEKLSESFGIKDGMHQEQKGLFEKIANWFKS</sequence>
<organism>
    <name type="scientific">Campylobacter jejuni subsp. jejuni serotype O:6 (strain 81116 / NCTC 11828)</name>
    <dbReference type="NCBI Taxonomy" id="407148"/>
    <lineage>
        <taxon>Bacteria</taxon>
        <taxon>Pseudomonadati</taxon>
        <taxon>Campylobacterota</taxon>
        <taxon>Epsilonproteobacteria</taxon>
        <taxon>Campylobacterales</taxon>
        <taxon>Campylobacteraceae</taxon>
        <taxon>Campylobacter</taxon>
    </lineage>
</organism>
<dbReference type="EMBL" id="CP000814">
    <property type="protein sequence ID" value="ABV52803.1"/>
    <property type="molecule type" value="Genomic_DNA"/>
</dbReference>
<dbReference type="RefSeq" id="WP_002876774.1">
    <property type="nucleotide sequence ID" value="NC_009839.1"/>
</dbReference>
<dbReference type="SMR" id="A8FMW6"/>
<dbReference type="KEGG" id="cju:C8J_1204"/>
<dbReference type="HOGENOM" id="CLU_017633_0_7_7"/>
<dbReference type="GO" id="GO:0005737">
    <property type="term" value="C:cytoplasm"/>
    <property type="evidence" value="ECO:0007669"/>
    <property type="project" value="UniProtKB-SubCell"/>
</dbReference>
<dbReference type="GO" id="GO:0005524">
    <property type="term" value="F:ATP binding"/>
    <property type="evidence" value="ECO:0007669"/>
    <property type="project" value="InterPro"/>
</dbReference>
<dbReference type="GO" id="GO:0031072">
    <property type="term" value="F:heat shock protein binding"/>
    <property type="evidence" value="ECO:0007669"/>
    <property type="project" value="InterPro"/>
</dbReference>
<dbReference type="GO" id="GO:0051082">
    <property type="term" value="F:unfolded protein binding"/>
    <property type="evidence" value="ECO:0007669"/>
    <property type="project" value="UniProtKB-UniRule"/>
</dbReference>
<dbReference type="GO" id="GO:0008270">
    <property type="term" value="F:zinc ion binding"/>
    <property type="evidence" value="ECO:0007669"/>
    <property type="project" value="UniProtKB-UniRule"/>
</dbReference>
<dbReference type="GO" id="GO:0051085">
    <property type="term" value="P:chaperone cofactor-dependent protein refolding"/>
    <property type="evidence" value="ECO:0007669"/>
    <property type="project" value="TreeGrafter"/>
</dbReference>
<dbReference type="GO" id="GO:0006260">
    <property type="term" value="P:DNA replication"/>
    <property type="evidence" value="ECO:0007669"/>
    <property type="project" value="UniProtKB-KW"/>
</dbReference>
<dbReference type="GO" id="GO:0042026">
    <property type="term" value="P:protein refolding"/>
    <property type="evidence" value="ECO:0007669"/>
    <property type="project" value="TreeGrafter"/>
</dbReference>
<dbReference type="GO" id="GO:0009408">
    <property type="term" value="P:response to heat"/>
    <property type="evidence" value="ECO:0007669"/>
    <property type="project" value="InterPro"/>
</dbReference>
<dbReference type="CDD" id="cd06257">
    <property type="entry name" value="DnaJ"/>
    <property type="match status" value="1"/>
</dbReference>
<dbReference type="CDD" id="cd10747">
    <property type="entry name" value="DnaJ_C"/>
    <property type="match status" value="1"/>
</dbReference>
<dbReference type="CDD" id="cd10719">
    <property type="entry name" value="DnaJ_zf"/>
    <property type="match status" value="1"/>
</dbReference>
<dbReference type="FunFam" id="1.10.287.110:FF:000034">
    <property type="entry name" value="Chaperone protein DnaJ"/>
    <property type="match status" value="1"/>
</dbReference>
<dbReference type="FunFam" id="2.60.260.20:FF:000055">
    <property type="entry name" value="Chaperone protein DnaJ"/>
    <property type="match status" value="1"/>
</dbReference>
<dbReference type="FunFam" id="2.10.230.10:FF:000002">
    <property type="entry name" value="Molecular chaperone DnaJ"/>
    <property type="match status" value="1"/>
</dbReference>
<dbReference type="Gene3D" id="1.10.287.110">
    <property type="entry name" value="DnaJ domain"/>
    <property type="match status" value="1"/>
</dbReference>
<dbReference type="Gene3D" id="2.10.230.10">
    <property type="entry name" value="Heat shock protein DnaJ, cysteine-rich domain"/>
    <property type="match status" value="1"/>
</dbReference>
<dbReference type="Gene3D" id="2.60.260.20">
    <property type="entry name" value="Urease metallochaperone UreE, N-terminal domain"/>
    <property type="match status" value="2"/>
</dbReference>
<dbReference type="HAMAP" id="MF_01152">
    <property type="entry name" value="DnaJ"/>
    <property type="match status" value="1"/>
</dbReference>
<dbReference type="InterPro" id="IPR012724">
    <property type="entry name" value="DnaJ"/>
</dbReference>
<dbReference type="InterPro" id="IPR002939">
    <property type="entry name" value="DnaJ_C"/>
</dbReference>
<dbReference type="InterPro" id="IPR001623">
    <property type="entry name" value="DnaJ_domain"/>
</dbReference>
<dbReference type="InterPro" id="IPR018253">
    <property type="entry name" value="DnaJ_domain_CS"/>
</dbReference>
<dbReference type="InterPro" id="IPR008971">
    <property type="entry name" value="HSP40/DnaJ_pept-bd"/>
</dbReference>
<dbReference type="InterPro" id="IPR001305">
    <property type="entry name" value="HSP_DnaJ_Cys-rich_dom"/>
</dbReference>
<dbReference type="InterPro" id="IPR036410">
    <property type="entry name" value="HSP_DnaJ_Cys-rich_dom_sf"/>
</dbReference>
<dbReference type="InterPro" id="IPR036869">
    <property type="entry name" value="J_dom_sf"/>
</dbReference>
<dbReference type="NCBIfam" id="TIGR02349">
    <property type="entry name" value="DnaJ_bact"/>
    <property type="match status" value="1"/>
</dbReference>
<dbReference type="NCBIfam" id="NF008035">
    <property type="entry name" value="PRK10767.1"/>
    <property type="match status" value="1"/>
</dbReference>
<dbReference type="PANTHER" id="PTHR43096:SF48">
    <property type="entry name" value="CHAPERONE PROTEIN DNAJ"/>
    <property type="match status" value="1"/>
</dbReference>
<dbReference type="PANTHER" id="PTHR43096">
    <property type="entry name" value="DNAJ HOMOLOG 1, MITOCHONDRIAL-RELATED"/>
    <property type="match status" value="1"/>
</dbReference>
<dbReference type="Pfam" id="PF00226">
    <property type="entry name" value="DnaJ"/>
    <property type="match status" value="1"/>
</dbReference>
<dbReference type="Pfam" id="PF01556">
    <property type="entry name" value="DnaJ_C"/>
    <property type="match status" value="1"/>
</dbReference>
<dbReference type="Pfam" id="PF00684">
    <property type="entry name" value="DnaJ_CXXCXGXG"/>
    <property type="match status" value="1"/>
</dbReference>
<dbReference type="PRINTS" id="PR00625">
    <property type="entry name" value="JDOMAIN"/>
</dbReference>
<dbReference type="SMART" id="SM00271">
    <property type="entry name" value="DnaJ"/>
    <property type="match status" value="1"/>
</dbReference>
<dbReference type="SUPFAM" id="SSF46565">
    <property type="entry name" value="Chaperone J-domain"/>
    <property type="match status" value="1"/>
</dbReference>
<dbReference type="SUPFAM" id="SSF57938">
    <property type="entry name" value="DnaJ/Hsp40 cysteine-rich domain"/>
    <property type="match status" value="1"/>
</dbReference>
<dbReference type="SUPFAM" id="SSF49493">
    <property type="entry name" value="HSP40/DnaJ peptide-binding domain"/>
    <property type="match status" value="2"/>
</dbReference>
<dbReference type="PROSITE" id="PS00636">
    <property type="entry name" value="DNAJ_1"/>
    <property type="match status" value="1"/>
</dbReference>
<dbReference type="PROSITE" id="PS50076">
    <property type="entry name" value="DNAJ_2"/>
    <property type="match status" value="1"/>
</dbReference>
<dbReference type="PROSITE" id="PS51188">
    <property type="entry name" value="ZF_CR"/>
    <property type="match status" value="1"/>
</dbReference>
<keyword id="KW-0143">Chaperone</keyword>
<keyword id="KW-0963">Cytoplasm</keyword>
<keyword id="KW-0235">DNA replication</keyword>
<keyword id="KW-0479">Metal-binding</keyword>
<keyword id="KW-0677">Repeat</keyword>
<keyword id="KW-0346">Stress response</keyword>
<keyword id="KW-0862">Zinc</keyword>
<keyword id="KW-0863">Zinc-finger</keyword>
<name>DNAJ_CAMJ8</name>
<evidence type="ECO:0000255" key="1">
    <source>
        <dbReference type="HAMAP-Rule" id="MF_01152"/>
    </source>
</evidence>
<proteinExistence type="inferred from homology"/>